<name>GNAT1_HUMAN</name>
<gene>
    <name type="primary">GNAT1</name>
    <name type="synonym">GNATR</name>
</gene>
<sequence>MGAGASAEEKHSRELEKKLKEDAEKDARTVKLLLLGAGESGKSTIVKQMKIIHQDGYSLEECLEFIAIIYGNTLQSILAIVRAMTTLNIQYGDSARQDDARKLMHMADTIEEGTMPKEMSDIIQRLWKDSGIQACFERASEYQLNDSAGYYLSDLERLVTPGYVPTEQDVLRSRVKTTGIIETQFSFKDLNFRMFDVGGQRSERKKWIHCFEGVTCIIFIAALSAYDMVLVEDDEVNRMHESLHLFNSICNHRYFATTSIVLFLNKKDVFFEKIKKAHLSICFPDYDGPNTYEDAGNYIKVQFLELNMRRDVKEIYSHMTCATDTQNVKFVFDAVTDIIIKENLKDCGLF</sequence>
<dbReference type="EMBL" id="X63749">
    <property type="protein sequence ID" value="CAB37839.2"/>
    <property type="molecule type" value="Genomic_DNA"/>
</dbReference>
<dbReference type="EMBL" id="X15088">
    <property type="protein sequence ID" value="CAA33196.1"/>
    <property type="molecule type" value="mRNA"/>
</dbReference>
<dbReference type="EMBL" id="AF493908">
    <property type="protein sequence ID" value="AAM12622.1"/>
    <property type="molecule type" value="mRNA"/>
</dbReference>
<dbReference type="EMBL" id="AC002077">
    <property type="protein sequence ID" value="AAB54048.1"/>
    <property type="molecule type" value="Genomic_DNA"/>
</dbReference>
<dbReference type="EMBL" id="BC095505">
    <property type="protein sequence ID" value="AAH95505.1"/>
    <property type="molecule type" value="mRNA"/>
</dbReference>
<dbReference type="CCDS" id="CCDS2812.1"/>
<dbReference type="PIR" id="S22953">
    <property type="entry name" value="RGHUT1"/>
</dbReference>
<dbReference type="RefSeq" id="NP_000163.2">
    <property type="nucleotide sequence ID" value="NM_000172.3"/>
</dbReference>
<dbReference type="RefSeq" id="NP_653082.1">
    <property type="nucleotide sequence ID" value="NM_144499.3"/>
</dbReference>
<dbReference type="PDB" id="3RBQ">
    <property type="method" value="X-ray"/>
    <property type="resolution" value="2.00 A"/>
    <property type="chains" value="G/H/I/J/K/L=2-11"/>
</dbReference>
<dbReference type="PDBsum" id="3RBQ"/>
<dbReference type="SMR" id="P11488"/>
<dbReference type="BioGRID" id="109041">
    <property type="interactions" value="28"/>
</dbReference>
<dbReference type="FunCoup" id="P11488">
    <property type="interactions" value="164"/>
</dbReference>
<dbReference type="IntAct" id="P11488">
    <property type="interactions" value="8"/>
</dbReference>
<dbReference type="MINT" id="P11488"/>
<dbReference type="STRING" id="9606.ENSP00000232461"/>
<dbReference type="DrugBank" id="DB02994">
    <property type="generic name" value="Cacodylic acid"/>
</dbReference>
<dbReference type="DrugBank" id="DB04315">
    <property type="generic name" value="Guanosine-5'-Diphosphate"/>
</dbReference>
<dbReference type="DrugBank" id="DB04444">
    <property type="generic name" value="Tetrafluoroaluminate Ion"/>
</dbReference>
<dbReference type="iPTMnet" id="P11488"/>
<dbReference type="PhosphoSitePlus" id="P11488"/>
<dbReference type="SwissPalm" id="P11488"/>
<dbReference type="BioMuta" id="GNAT1"/>
<dbReference type="DMDM" id="121032"/>
<dbReference type="jPOST" id="P11488"/>
<dbReference type="MassIVE" id="P11488"/>
<dbReference type="PaxDb" id="9606-ENSP00000232461"/>
<dbReference type="PeptideAtlas" id="P11488"/>
<dbReference type="ProteomicsDB" id="52784"/>
<dbReference type="Antibodypedia" id="13896">
    <property type="antibodies" value="193 antibodies from 26 providers"/>
</dbReference>
<dbReference type="DNASU" id="2779"/>
<dbReference type="Ensembl" id="ENST00000232461.8">
    <property type="protein sequence ID" value="ENSP00000232461.3"/>
    <property type="gene ID" value="ENSG00000114349.10"/>
</dbReference>
<dbReference type="Ensembl" id="ENST00000433068.5">
    <property type="protein sequence ID" value="ENSP00000387555.1"/>
    <property type="gene ID" value="ENSG00000114349.10"/>
</dbReference>
<dbReference type="GeneID" id="2779"/>
<dbReference type="KEGG" id="hsa:2779"/>
<dbReference type="MANE-Select" id="ENST00000232461.8">
    <property type="protein sequence ID" value="ENSP00000232461.3"/>
    <property type="RefSeq nucleotide sequence ID" value="NM_144499.3"/>
    <property type="RefSeq protein sequence ID" value="NP_653082.1"/>
</dbReference>
<dbReference type="UCSC" id="uc003cyl.3">
    <property type="organism name" value="human"/>
</dbReference>
<dbReference type="AGR" id="HGNC:4393"/>
<dbReference type="CTD" id="2779"/>
<dbReference type="DisGeNET" id="2779"/>
<dbReference type="GeneCards" id="GNAT1"/>
<dbReference type="HGNC" id="HGNC:4393">
    <property type="gene designation" value="GNAT1"/>
</dbReference>
<dbReference type="HPA" id="ENSG00000114349">
    <property type="expression patterns" value="Tissue enriched (retina)"/>
</dbReference>
<dbReference type="MalaCards" id="GNAT1"/>
<dbReference type="MIM" id="139330">
    <property type="type" value="gene"/>
</dbReference>
<dbReference type="MIM" id="610444">
    <property type="type" value="phenotype"/>
</dbReference>
<dbReference type="MIM" id="616389">
    <property type="type" value="phenotype"/>
</dbReference>
<dbReference type="neXtProt" id="NX_P11488"/>
<dbReference type="OpenTargets" id="ENSG00000114349"/>
<dbReference type="Orphanet" id="215">
    <property type="disease" value="Congenital stationary night blindness"/>
</dbReference>
<dbReference type="PharmGKB" id="PA28773"/>
<dbReference type="VEuPathDB" id="HostDB:ENSG00000114349"/>
<dbReference type="eggNOG" id="KOG0082">
    <property type="taxonomic scope" value="Eukaryota"/>
</dbReference>
<dbReference type="GeneTree" id="ENSGT00940000160395"/>
<dbReference type="HOGENOM" id="CLU_014184_6_0_1"/>
<dbReference type="InParanoid" id="P11488"/>
<dbReference type="OMA" id="INYGHPD"/>
<dbReference type="OrthoDB" id="5817230at2759"/>
<dbReference type="PAN-GO" id="P11488">
    <property type="GO annotations" value="6 GO annotations based on evolutionary models"/>
</dbReference>
<dbReference type="PhylomeDB" id="P11488"/>
<dbReference type="TreeFam" id="TF300673"/>
<dbReference type="PathwayCommons" id="P11488"/>
<dbReference type="Reactome" id="R-HSA-2485179">
    <property type="pathway name" value="Activation of the phototransduction cascade"/>
</dbReference>
<dbReference type="Reactome" id="R-HSA-2514859">
    <property type="pathway name" value="Inactivation, recovery and regulation of the phototransduction cascade"/>
</dbReference>
<dbReference type="Reactome" id="R-HSA-418594">
    <property type="pathway name" value="G alpha (i) signalling events"/>
</dbReference>
<dbReference type="SignaLink" id="P11488"/>
<dbReference type="SIGNOR" id="P11488"/>
<dbReference type="BioGRID-ORCS" id="2779">
    <property type="hits" value="37 hits in 1144 CRISPR screens"/>
</dbReference>
<dbReference type="EvolutionaryTrace" id="P11488"/>
<dbReference type="GeneWiki" id="GNAT1"/>
<dbReference type="GenomeRNAi" id="2779"/>
<dbReference type="Pharos" id="P11488">
    <property type="development level" value="Tbio"/>
</dbReference>
<dbReference type="PRO" id="PR:P11488"/>
<dbReference type="Proteomes" id="UP000005640">
    <property type="component" value="Chromosome 3"/>
</dbReference>
<dbReference type="RNAct" id="P11488">
    <property type="molecule type" value="protein"/>
</dbReference>
<dbReference type="Bgee" id="ENSG00000114349">
    <property type="expression patterns" value="Expressed in neuron projection bundle connecting eye with brain and 91 other cell types or tissues"/>
</dbReference>
<dbReference type="ExpressionAtlas" id="P11488">
    <property type="expression patterns" value="baseline and differential"/>
</dbReference>
<dbReference type="GO" id="GO:0016324">
    <property type="term" value="C:apical plasma membrane"/>
    <property type="evidence" value="ECO:0007669"/>
    <property type="project" value="Ensembl"/>
</dbReference>
<dbReference type="GO" id="GO:0005737">
    <property type="term" value="C:cytoplasm"/>
    <property type="evidence" value="ECO:0000318"/>
    <property type="project" value="GO_Central"/>
</dbReference>
<dbReference type="GO" id="GO:0005829">
    <property type="term" value="C:cytosol"/>
    <property type="evidence" value="ECO:0000304"/>
    <property type="project" value="Reactome"/>
</dbReference>
<dbReference type="GO" id="GO:0005834">
    <property type="term" value="C:heterotrimeric G-protein complex"/>
    <property type="evidence" value="ECO:0000318"/>
    <property type="project" value="GO_Central"/>
</dbReference>
<dbReference type="GO" id="GO:0016020">
    <property type="term" value="C:membrane"/>
    <property type="evidence" value="ECO:0000250"/>
    <property type="project" value="AgBase"/>
</dbReference>
<dbReference type="GO" id="GO:0043025">
    <property type="term" value="C:neuronal cell body"/>
    <property type="evidence" value="ECO:0007669"/>
    <property type="project" value="Ensembl"/>
</dbReference>
<dbReference type="GO" id="GO:0032391">
    <property type="term" value="C:photoreceptor connecting cilium"/>
    <property type="evidence" value="ECO:0007669"/>
    <property type="project" value="Ensembl"/>
</dbReference>
<dbReference type="GO" id="GO:0097381">
    <property type="term" value="C:photoreceptor disc membrane"/>
    <property type="evidence" value="ECO:0000304"/>
    <property type="project" value="Reactome"/>
</dbReference>
<dbReference type="GO" id="GO:0001917">
    <property type="term" value="C:photoreceptor inner segment"/>
    <property type="evidence" value="ECO:0000314"/>
    <property type="project" value="UniProtKB"/>
</dbReference>
<dbReference type="GO" id="GO:0001750">
    <property type="term" value="C:photoreceptor outer segment"/>
    <property type="evidence" value="ECO:0000314"/>
    <property type="project" value="UniProtKB"/>
</dbReference>
<dbReference type="GO" id="GO:0042622">
    <property type="term" value="C:photoreceptor outer segment membrane"/>
    <property type="evidence" value="ECO:0000250"/>
    <property type="project" value="UniProtKB"/>
</dbReference>
<dbReference type="GO" id="GO:0005886">
    <property type="term" value="C:plasma membrane"/>
    <property type="evidence" value="ECO:0000304"/>
    <property type="project" value="Reactome"/>
</dbReference>
<dbReference type="GO" id="GO:0000035">
    <property type="term" value="F:acyl binding"/>
    <property type="evidence" value="ECO:0000250"/>
    <property type="project" value="UniProtKB"/>
</dbReference>
<dbReference type="GO" id="GO:0001664">
    <property type="term" value="F:G protein-coupled receptor binding"/>
    <property type="evidence" value="ECO:0000318"/>
    <property type="project" value="GO_Central"/>
</dbReference>
<dbReference type="GO" id="GO:0031683">
    <property type="term" value="F:G-protein beta/gamma-subunit complex binding"/>
    <property type="evidence" value="ECO:0000318"/>
    <property type="project" value="GO_Central"/>
</dbReference>
<dbReference type="GO" id="GO:0019003">
    <property type="term" value="F:GDP binding"/>
    <property type="evidence" value="ECO:0000250"/>
    <property type="project" value="UniProtKB"/>
</dbReference>
<dbReference type="GO" id="GO:0005525">
    <property type="term" value="F:GTP binding"/>
    <property type="evidence" value="ECO:0000250"/>
    <property type="project" value="UniProtKB"/>
</dbReference>
<dbReference type="GO" id="GO:0003924">
    <property type="term" value="F:GTPase activity"/>
    <property type="evidence" value="ECO:0000318"/>
    <property type="project" value="GO_Central"/>
</dbReference>
<dbReference type="GO" id="GO:0046872">
    <property type="term" value="F:metal ion binding"/>
    <property type="evidence" value="ECO:0007669"/>
    <property type="project" value="UniProtKB-KW"/>
</dbReference>
<dbReference type="GO" id="GO:0019901">
    <property type="term" value="F:protein kinase binding"/>
    <property type="evidence" value="ECO:0000250"/>
    <property type="project" value="UniProtKB"/>
</dbReference>
<dbReference type="GO" id="GO:0007188">
    <property type="term" value="P:adenylate cyclase-modulating G protein-coupled receptor signaling pathway"/>
    <property type="evidence" value="ECO:0000318"/>
    <property type="project" value="GO_Central"/>
</dbReference>
<dbReference type="GO" id="GO:0120302">
    <property type="term" value="P:background adaptation"/>
    <property type="evidence" value="ECO:0007669"/>
    <property type="project" value="Ensembl"/>
</dbReference>
<dbReference type="GO" id="GO:0008283">
    <property type="term" value="P:cell population proliferation"/>
    <property type="evidence" value="ECO:0007669"/>
    <property type="project" value="Ensembl"/>
</dbReference>
<dbReference type="GO" id="GO:0071257">
    <property type="term" value="P:cellular response to electrical stimulus"/>
    <property type="evidence" value="ECO:0007669"/>
    <property type="project" value="Ensembl"/>
</dbReference>
<dbReference type="GO" id="GO:0001580">
    <property type="term" value="P:detection of chemical stimulus involved in sensory perception of bitter taste"/>
    <property type="evidence" value="ECO:0007669"/>
    <property type="project" value="Ensembl"/>
</dbReference>
<dbReference type="GO" id="GO:0050908">
    <property type="term" value="P:detection of light stimulus involved in visual perception"/>
    <property type="evidence" value="ECO:0000315"/>
    <property type="project" value="UniProtKB"/>
</dbReference>
<dbReference type="GO" id="GO:0014046">
    <property type="term" value="P:dopamine secretion"/>
    <property type="evidence" value="ECO:0007669"/>
    <property type="project" value="Ensembl"/>
</dbReference>
<dbReference type="GO" id="GO:0042462">
    <property type="term" value="P:eye photoreceptor cell development"/>
    <property type="evidence" value="ECO:0007669"/>
    <property type="project" value="Ensembl"/>
</dbReference>
<dbReference type="GO" id="GO:0016056">
    <property type="term" value="P:G protein-coupled opsin signaling pathway"/>
    <property type="evidence" value="ECO:0007669"/>
    <property type="project" value="Ensembl"/>
</dbReference>
<dbReference type="GO" id="GO:0051344">
    <property type="term" value="P:negative regulation of cyclic-nucleotide phosphodiesterase activity"/>
    <property type="evidence" value="ECO:0000250"/>
    <property type="project" value="UniProtKB"/>
</dbReference>
<dbReference type="GO" id="GO:0097719">
    <property type="term" value="P:neural tissue regeneration"/>
    <property type="evidence" value="ECO:0007669"/>
    <property type="project" value="Ensembl"/>
</dbReference>
<dbReference type="GO" id="GO:0007603">
    <property type="term" value="P:phototransduction, visible light"/>
    <property type="evidence" value="ECO:0000315"/>
    <property type="project" value="UniProtKB"/>
</dbReference>
<dbReference type="GO" id="GO:0022400">
    <property type="term" value="P:regulation of opsin-mediated signaling pathway"/>
    <property type="evidence" value="ECO:0000304"/>
    <property type="project" value="Reactome"/>
</dbReference>
<dbReference type="GO" id="GO:0009416">
    <property type="term" value="P:response to light stimulus"/>
    <property type="evidence" value="ECO:0000250"/>
    <property type="project" value="UniProtKB"/>
</dbReference>
<dbReference type="GO" id="GO:0042670">
    <property type="term" value="P:retinal cone cell differentiation"/>
    <property type="evidence" value="ECO:0007669"/>
    <property type="project" value="Ensembl"/>
</dbReference>
<dbReference type="GO" id="GO:0060221">
    <property type="term" value="P:retinal rod cell differentiation"/>
    <property type="evidence" value="ECO:0007669"/>
    <property type="project" value="Ensembl"/>
</dbReference>
<dbReference type="GO" id="GO:0050917">
    <property type="term" value="P:sensory perception of umami taste"/>
    <property type="evidence" value="ECO:0007669"/>
    <property type="project" value="Ensembl"/>
</dbReference>
<dbReference type="GO" id="GO:0007165">
    <property type="term" value="P:signal transduction"/>
    <property type="evidence" value="ECO:0000303"/>
    <property type="project" value="UniProtKB"/>
</dbReference>
<dbReference type="GO" id="GO:0007632">
    <property type="term" value="P:visual behavior"/>
    <property type="evidence" value="ECO:0007669"/>
    <property type="project" value="Ensembl"/>
</dbReference>
<dbReference type="GO" id="GO:0007601">
    <property type="term" value="P:visual perception"/>
    <property type="evidence" value="ECO:0000304"/>
    <property type="project" value="UniProtKB"/>
</dbReference>
<dbReference type="CDD" id="cd00066">
    <property type="entry name" value="G-alpha"/>
    <property type="match status" value="1"/>
</dbReference>
<dbReference type="FunFam" id="1.10.400.10:FF:000001">
    <property type="entry name" value="Guanine nucleotide-binding protein G(I) subunit alpha"/>
    <property type="match status" value="1"/>
</dbReference>
<dbReference type="FunFam" id="3.40.50.300:FF:000720">
    <property type="entry name" value="Guanine nucleotide-binding protein G(k) subunit alpha"/>
    <property type="match status" value="1"/>
</dbReference>
<dbReference type="FunFam" id="3.40.50.300:FF:000256">
    <property type="entry name" value="Guanine nucleotide-binding protein G(t) subunit alpha"/>
    <property type="match status" value="1"/>
</dbReference>
<dbReference type="Gene3D" id="1.10.400.10">
    <property type="entry name" value="GI Alpha 1, domain 2-like"/>
    <property type="match status" value="1"/>
</dbReference>
<dbReference type="Gene3D" id="3.40.50.300">
    <property type="entry name" value="P-loop containing nucleotide triphosphate hydrolases"/>
    <property type="match status" value="1"/>
</dbReference>
<dbReference type="InterPro" id="IPR001408">
    <property type="entry name" value="Gprotein_alpha_I"/>
</dbReference>
<dbReference type="InterPro" id="IPR001019">
    <property type="entry name" value="Gprotein_alpha_su"/>
</dbReference>
<dbReference type="InterPro" id="IPR011025">
    <property type="entry name" value="GproteinA_insert"/>
</dbReference>
<dbReference type="InterPro" id="IPR027417">
    <property type="entry name" value="P-loop_NTPase"/>
</dbReference>
<dbReference type="PANTHER" id="PTHR10218">
    <property type="entry name" value="GTP-BINDING PROTEIN ALPHA SUBUNIT"/>
    <property type="match status" value="1"/>
</dbReference>
<dbReference type="PANTHER" id="PTHR10218:SF67">
    <property type="entry name" value="GUANINE NUCLEOTIDE-BINDING PROTEIN G(T) SUBUNIT ALPHA-1"/>
    <property type="match status" value="1"/>
</dbReference>
<dbReference type="Pfam" id="PF00503">
    <property type="entry name" value="G-alpha"/>
    <property type="match status" value="1"/>
</dbReference>
<dbReference type="PRINTS" id="PR00318">
    <property type="entry name" value="GPROTEINA"/>
</dbReference>
<dbReference type="PRINTS" id="PR00441">
    <property type="entry name" value="GPROTEINAI"/>
</dbReference>
<dbReference type="SMART" id="SM00275">
    <property type="entry name" value="G_alpha"/>
    <property type="match status" value="1"/>
</dbReference>
<dbReference type="SUPFAM" id="SSF52540">
    <property type="entry name" value="P-loop containing nucleoside triphosphate hydrolases"/>
    <property type="match status" value="1"/>
</dbReference>
<dbReference type="SUPFAM" id="SSF47895">
    <property type="entry name" value="Transducin (alpha subunit), insertion domain"/>
    <property type="match status" value="1"/>
</dbReference>
<dbReference type="PROSITE" id="PS51882">
    <property type="entry name" value="G_ALPHA"/>
    <property type="match status" value="1"/>
</dbReference>
<reference key="1">
    <citation type="journal article" date="1992" name="Nucleic Acids Res.">
        <title>Characterization of the human rod transducin alpha-subunit gene.</title>
        <authorList>
            <person name="Fong S.-L."/>
        </authorList>
    </citation>
    <scope>NUCLEOTIDE SEQUENCE [GENOMIC DNA]</scope>
    <scope>TISSUE SPECIFICITY</scope>
</reference>
<reference key="2">
    <citation type="journal article" date="1989" name="Neuron">
        <title>Alpha transducin is present in blue-, green-, and red-sensitive cone photoreceptors in the human retina.</title>
        <authorList>
            <person name="Lerea C.L."/>
            <person name="Bunt-Milam A.H."/>
            <person name="Hurley J.B."/>
        </authorList>
    </citation>
    <scope>NUCLEOTIDE SEQUENCE [MRNA]</scope>
    <source>
        <tissue>Retina</tissue>
    </source>
</reference>
<reference key="3">
    <citation type="journal article" date="1989" name="Nucleic Acids Res.">
        <title>Nucleotide sequence for a cDNA encoding the alpha subunit of retinal transducin (GNAT1) isolated from the human eye.</title>
        <authorList>
            <person name="van Dop C."/>
            <person name="Medynski D.C."/>
            <person name="Apone L.M."/>
        </authorList>
    </citation>
    <scope>NUCLEOTIDE SEQUENCE [MRNA]</scope>
    <source>
        <tissue>Eye</tissue>
    </source>
</reference>
<reference key="4">
    <citation type="submission" date="2002-03" db="EMBL/GenBank/DDBJ databases">
        <title>cDNA clones of human proteins involved in signal transduction sequenced by the Guthrie cDNA resource center (www.cdna.org).</title>
        <authorList>
            <person name="Puhl H.L. III"/>
            <person name="Ikeda S.R."/>
            <person name="Aronstam R.S."/>
        </authorList>
    </citation>
    <scope>NUCLEOTIDE SEQUENCE [LARGE SCALE MRNA]</scope>
</reference>
<reference key="5">
    <citation type="journal article" date="2006" name="Nature">
        <title>The DNA sequence, annotation and analysis of human chromosome 3.</title>
        <authorList>
            <person name="Muzny D.M."/>
            <person name="Scherer S.E."/>
            <person name="Kaul R."/>
            <person name="Wang J."/>
            <person name="Yu J."/>
            <person name="Sudbrak R."/>
            <person name="Buhay C.J."/>
            <person name="Chen R."/>
            <person name="Cree A."/>
            <person name="Ding Y."/>
            <person name="Dugan-Rocha S."/>
            <person name="Gill R."/>
            <person name="Gunaratne P."/>
            <person name="Harris R.A."/>
            <person name="Hawes A.C."/>
            <person name="Hernandez J."/>
            <person name="Hodgson A.V."/>
            <person name="Hume J."/>
            <person name="Jackson A."/>
            <person name="Khan Z.M."/>
            <person name="Kovar-Smith C."/>
            <person name="Lewis L.R."/>
            <person name="Lozado R.J."/>
            <person name="Metzker M.L."/>
            <person name="Milosavljevic A."/>
            <person name="Miner G.R."/>
            <person name="Morgan M.B."/>
            <person name="Nazareth L.V."/>
            <person name="Scott G."/>
            <person name="Sodergren E."/>
            <person name="Song X.-Z."/>
            <person name="Steffen D."/>
            <person name="Wei S."/>
            <person name="Wheeler D.A."/>
            <person name="Wright M.W."/>
            <person name="Worley K.C."/>
            <person name="Yuan Y."/>
            <person name="Zhang Z."/>
            <person name="Adams C.Q."/>
            <person name="Ansari-Lari M.A."/>
            <person name="Ayele M."/>
            <person name="Brown M.J."/>
            <person name="Chen G."/>
            <person name="Chen Z."/>
            <person name="Clendenning J."/>
            <person name="Clerc-Blankenburg K.P."/>
            <person name="Chen R."/>
            <person name="Chen Z."/>
            <person name="Davis C."/>
            <person name="Delgado O."/>
            <person name="Dinh H.H."/>
            <person name="Dong W."/>
            <person name="Draper H."/>
            <person name="Ernst S."/>
            <person name="Fu G."/>
            <person name="Gonzalez-Garay M.L."/>
            <person name="Garcia D.K."/>
            <person name="Gillett W."/>
            <person name="Gu J."/>
            <person name="Hao B."/>
            <person name="Haugen E."/>
            <person name="Havlak P."/>
            <person name="He X."/>
            <person name="Hennig S."/>
            <person name="Hu S."/>
            <person name="Huang W."/>
            <person name="Jackson L.R."/>
            <person name="Jacob L.S."/>
            <person name="Kelly S.H."/>
            <person name="Kube M."/>
            <person name="Levy R."/>
            <person name="Li Z."/>
            <person name="Liu B."/>
            <person name="Liu J."/>
            <person name="Liu W."/>
            <person name="Lu J."/>
            <person name="Maheshwari M."/>
            <person name="Nguyen B.-V."/>
            <person name="Okwuonu G.O."/>
            <person name="Palmeiri A."/>
            <person name="Pasternak S."/>
            <person name="Perez L.M."/>
            <person name="Phelps K.A."/>
            <person name="Plopper F.J."/>
            <person name="Qiang B."/>
            <person name="Raymond C."/>
            <person name="Rodriguez R."/>
            <person name="Saenphimmachak C."/>
            <person name="Santibanez J."/>
            <person name="Shen H."/>
            <person name="Shen Y."/>
            <person name="Subramanian S."/>
            <person name="Tabor P.E."/>
            <person name="Verduzco D."/>
            <person name="Waldron L."/>
            <person name="Wang J."/>
            <person name="Wang J."/>
            <person name="Wang Q."/>
            <person name="Williams G.A."/>
            <person name="Wong G.K.-S."/>
            <person name="Yao Z."/>
            <person name="Zhang J."/>
            <person name="Zhang X."/>
            <person name="Zhao G."/>
            <person name="Zhou J."/>
            <person name="Zhou Y."/>
            <person name="Nelson D."/>
            <person name="Lehrach H."/>
            <person name="Reinhardt R."/>
            <person name="Naylor S.L."/>
            <person name="Yang H."/>
            <person name="Olson M."/>
            <person name="Weinstock G."/>
            <person name="Gibbs R.A."/>
        </authorList>
    </citation>
    <scope>NUCLEOTIDE SEQUENCE [LARGE SCALE GENOMIC DNA]</scope>
</reference>
<reference key="6">
    <citation type="journal article" date="2004" name="Genome Res.">
        <title>The status, quality, and expansion of the NIH full-length cDNA project: the Mammalian Gene Collection (MGC).</title>
        <authorList>
            <consortium name="The MGC Project Team"/>
        </authorList>
    </citation>
    <scope>NUCLEOTIDE SEQUENCE [LARGE SCALE MRNA]</scope>
</reference>
<reference key="7">
    <citation type="journal article" date="2000" name="J. Neurochem.">
        <title>Tyrosine phosphorylation of the alpha subunit of transducin and its association with Src in photoreceptor rod outer segments.</title>
        <authorList>
            <person name="Bell M.W."/>
            <person name="Desai N."/>
            <person name="Guo X.X."/>
            <person name="Ghalayini A.J."/>
        </authorList>
    </citation>
    <scope>PHOSPHORYLATION AT TYR-142</scope>
</reference>
<reference key="8">
    <citation type="journal article" date="2007" name="Hum. Mutat.">
        <title>p.Gln200Glu, a putative constitutively active mutant of rod alpha-transducin (GNAT1) in autosomal dominant congenital stationary night blindness.</title>
        <authorList>
            <person name="Szabo V."/>
            <person name="Kreienkamp H.J."/>
            <person name="Rosenberg T."/>
            <person name="Gal A."/>
        </authorList>
    </citation>
    <scope>INVOLVEMENT IN CSNBAD3</scope>
    <scope>VARIANT CSNBAD3 GLU-200</scope>
</reference>
<reference key="9">
    <citation type="journal article" date="2012" name="Invest. Ophthalmol. Vis. Sci.">
        <title>GNAT1 associated with autosomal recessive congenital stationary night blindness.</title>
        <authorList>
            <person name="Naeem M.A."/>
            <person name="Chavali V.R."/>
            <person name="Ali S."/>
            <person name="Iqbal M."/>
            <person name="Riazuddin S."/>
            <person name="Khan S.N."/>
            <person name="Husnain T."/>
            <person name="Sieving P.A."/>
            <person name="Ayyagari R."/>
            <person name="Riazuddin S."/>
            <person name="Hejtmancik J.F."/>
            <person name="Riazuddin S.A."/>
        </authorList>
    </citation>
    <scope>FUNCTION</scope>
    <scope>TISSUE SPECIFICITY</scope>
    <scope>DEVELOPMENTAL STAGE</scope>
    <scope>INVOLVEMENT IN CSNB1G</scope>
    <scope>VARIANT CSNB1G GLY-129</scope>
</reference>
<reference key="10">
    <citation type="journal article" date="1996" name="Nat. Genet.">
        <title>Missense mutation in the gene encoding the alpha subunit of rod transducin in the Nougaret form of congenital stationary night blindness.</title>
        <authorList>
            <person name="Dryja T.P."/>
            <person name="Hahn L.B."/>
            <person name="Reboul T."/>
            <person name="Arnaud B."/>
        </authorList>
    </citation>
    <scope>VARIANT CSNBAD3 ASP-38</scope>
</reference>
<reference key="11">
    <citation type="journal article" date="2011" name="Nat. Neurosci.">
        <title>UNC119 is required for G protein trafficking in sensory neurons.</title>
        <authorList>
            <person name="Zhang H."/>
            <person name="Constantine R."/>
            <person name="Vorobiev S."/>
            <person name="Chen Y."/>
            <person name="Seetharaman J."/>
            <person name="Huang Y.J."/>
            <person name="Xiao R."/>
            <person name="Montelione G.T."/>
            <person name="Gerstner C.D."/>
            <person name="Davis M.W."/>
            <person name="Inana G."/>
            <person name="Whitby F.G."/>
            <person name="Jorgensen E.M."/>
            <person name="Hill C.P."/>
            <person name="Tong L."/>
            <person name="Baehr W."/>
        </authorList>
    </citation>
    <scope>X-RAY CRYSTALLOGRAPHY (2.0 ANGSTROMS) OF 2-11 IN COMPLEX WITH UNC119</scope>
    <scope>MYRISTOYLATION AT GLY-2</scope>
    <scope>INTERACTION WITH UNC119</scope>
    <scope>MUTAGENESIS OF GLY-2</scope>
</reference>
<accession>P11488</accession>
<accession>Q4VBN2</accession>
<protein>
    <recommendedName>
        <fullName>Guanine nucleotide-binding protein G(t) subunit alpha-1</fullName>
    </recommendedName>
    <alternativeName>
        <fullName>Transducin alpha-1 chain</fullName>
    </alternativeName>
</protein>
<evidence type="ECO:0000250" key="1"/>
<evidence type="ECO:0000250" key="2">
    <source>
        <dbReference type="UniProtKB" id="P04695"/>
    </source>
</evidence>
<evidence type="ECO:0000250" key="3">
    <source>
        <dbReference type="UniProtKB" id="P20612"/>
    </source>
</evidence>
<evidence type="ECO:0000255" key="4">
    <source>
        <dbReference type="PROSITE-ProRule" id="PRU01230"/>
    </source>
</evidence>
<evidence type="ECO:0000256" key="5">
    <source>
        <dbReference type="SAM" id="MobiDB-lite"/>
    </source>
</evidence>
<evidence type="ECO:0000269" key="6">
    <source>
    </source>
</evidence>
<evidence type="ECO:0000269" key="7">
    <source>
    </source>
</evidence>
<evidence type="ECO:0000269" key="8">
    <source>
    </source>
</evidence>
<evidence type="ECO:0000269" key="9">
    <source>
    </source>
</evidence>
<evidence type="ECO:0000269" key="10">
    <source>
    </source>
</evidence>
<evidence type="ECO:0000269" key="11">
    <source>
    </source>
</evidence>
<evidence type="ECO:0000305" key="12"/>
<evidence type="ECO:0007829" key="13">
    <source>
        <dbReference type="PDB" id="3RBQ"/>
    </source>
</evidence>
<feature type="initiator methionine" description="Removed">
    <location>
        <position position="1"/>
    </location>
</feature>
<feature type="chain" id="PRO_0000203737" description="Guanine nucleotide-binding protein G(t) subunit alpha-1">
    <location>
        <begin position="2"/>
        <end position="350"/>
    </location>
</feature>
<feature type="domain" description="G-alpha" evidence="4">
    <location>
        <begin position="28"/>
        <end position="350"/>
    </location>
</feature>
<feature type="region of interest" description="Disordered" evidence="5">
    <location>
        <begin position="1"/>
        <end position="21"/>
    </location>
</feature>
<feature type="region of interest" description="G1 motif" evidence="4">
    <location>
        <begin position="31"/>
        <end position="44"/>
    </location>
</feature>
<feature type="region of interest" description="G2 motif" evidence="4">
    <location>
        <begin position="169"/>
        <end position="177"/>
    </location>
</feature>
<feature type="region of interest" description="G3 motif" evidence="4">
    <location>
        <begin position="192"/>
        <end position="201"/>
    </location>
</feature>
<feature type="region of interest" description="G4 motif" evidence="4">
    <location>
        <begin position="261"/>
        <end position="268"/>
    </location>
</feature>
<feature type="region of interest" description="G5 motif" evidence="4">
    <location>
        <begin position="320"/>
        <end position="325"/>
    </location>
</feature>
<feature type="region of interest" description="Interaction with RHO" evidence="2">
    <location>
        <begin position="340"/>
        <end position="350"/>
    </location>
</feature>
<feature type="compositionally biased region" description="Basic and acidic residues" evidence="5">
    <location>
        <begin position="7"/>
        <end position="21"/>
    </location>
</feature>
<feature type="binding site" evidence="2">
    <location>
        <begin position="36"/>
        <end position="43"/>
    </location>
    <ligand>
        <name>GTP</name>
        <dbReference type="ChEBI" id="CHEBI:37565"/>
    </ligand>
</feature>
<feature type="binding site" evidence="1">
    <location>
        <position position="43"/>
    </location>
    <ligand>
        <name>Mg(2+)</name>
        <dbReference type="ChEBI" id="CHEBI:18420"/>
    </ligand>
</feature>
<feature type="binding site" evidence="2">
    <location>
        <position position="146"/>
    </location>
    <ligand>
        <name>GTP</name>
        <dbReference type="ChEBI" id="CHEBI:37565"/>
    </ligand>
</feature>
<feature type="binding site" evidence="2">
    <location>
        <begin position="171"/>
        <end position="177"/>
    </location>
    <ligand>
        <name>GTP</name>
        <dbReference type="ChEBI" id="CHEBI:37565"/>
    </ligand>
</feature>
<feature type="binding site" evidence="1">
    <location>
        <position position="177"/>
    </location>
    <ligand>
        <name>Mg(2+)</name>
        <dbReference type="ChEBI" id="CHEBI:18420"/>
    </ligand>
</feature>
<feature type="binding site" evidence="2">
    <location>
        <position position="199"/>
    </location>
    <ligand>
        <name>GTP</name>
        <dbReference type="ChEBI" id="CHEBI:37565"/>
    </ligand>
</feature>
<feature type="binding site" evidence="2">
    <location>
        <begin position="265"/>
        <end position="268"/>
    </location>
    <ligand>
        <name>GTP</name>
        <dbReference type="ChEBI" id="CHEBI:37565"/>
    </ligand>
</feature>
<feature type="binding site" evidence="2">
    <location>
        <position position="322"/>
    </location>
    <ligand>
        <name>GTP</name>
        <dbReference type="ChEBI" id="CHEBI:37565"/>
    </ligand>
</feature>
<feature type="modified residue" description="Phosphotyrosine; by SRC" evidence="6">
    <location>
        <position position="142"/>
    </location>
</feature>
<feature type="modified residue" description="ADP-ribosylarginine; by cholera toxin" evidence="1">
    <location>
        <position position="174"/>
    </location>
</feature>
<feature type="modified residue" description="ADP-ribosylcysteine; by pertussis toxin" evidence="1">
    <location>
        <position position="347"/>
    </location>
</feature>
<feature type="lipid moiety-binding region" description="N-myristoyl glycine" evidence="9">
    <location>
        <position position="2"/>
    </location>
</feature>
<feature type="sequence variant" id="VAR_009279" description="In CSNBAD3; dbSNP:rs104893740." evidence="11">
    <original>G</original>
    <variation>D</variation>
    <location>
        <position position="38"/>
    </location>
</feature>
<feature type="sequence variant" id="VAR_073798" description="In CSNB1G; dbSNP:rs786205854." evidence="10">
    <original>D</original>
    <variation>G</variation>
    <location>
        <position position="129"/>
    </location>
</feature>
<feature type="sequence variant" id="VAR_073799" description="In CSNBAD3; dbSNP:rs786205853." evidence="8">
    <original>Q</original>
    <variation>E</variation>
    <location>
        <position position="200"/>
    </location>
</feature>
<feature type="mutagenesis site" description="Abolishes myristoylation, interaction with UNC119 and localization." evidence="9">
    <original>G</original>
    <variation>A</variation>
    <location>
        <position position="2"/>
    </location>
</feature>
<feature type="sequence conflict" description="In Ref. 3; CAA33196." evidence="12" ref="3">
    <original>R</original>
    <variation>P</variation>
    <location>
        <position position="204"/>
    </location>
</feature>
<feature type="sequence conflict" description="In Ref. 3; CAA33196." evidence="12" ref="3">
    <original>S</original>
    <variation>T</variation>
    <location>
        <position position="224"/>
    </location>
</feature>
<feature type="sequence conflict" description="In Ref. 3; CAA33196." evidence="12" ref="3">
    <original>I</original>
    <variation>V</variation>
    <location>
        <position position="274"/>
    </location>
</feature>
<feature type="sequence conflict" description="In Ref. 3; CAA33196." evidence="12" ref="3">
    <original>V</original>
    <variation>C</variation>
    <location>
        <position position="331"/>
    </location>
</feature>
<feature type="turn" evidence="13">
    <location>
        <begin position="3"/>
        <end position="7"/>
    </location>
</feature>
<organism>
    <name type="scientific">Homo sapiens</name>
    <name type="common">Human</name>
    <dbReference type="NCBI Taxonomy" id="9606"/>
    <lineage>
        <taxon>Eukaryota</taxon>
        <taxon>Metazoa</taxon>
        <taxon>Chordata</taxon>
        <taxon>Craniata</taxon>
        <taxon>Vertebrata</taxon>
        <taxon>Euteleostomi</taxon>
        <taxon>Mammalia</taxon>
        <taxon>Eutheria</taxon>
        <taxon>Euarchontoglires</taxon>
        <taxon>Primates</taxon>
        <taxon>Haplorrhini</taxon>
        <taxon>Catarrhini</taxon>
        <taxon>Hominidae</taxon>
        <taxon>Homo</taxon>
    </lineage>
</organism>
<comment type="function">
    <text evidence="2 10">Functions as a signal transducer for the rod photoreceptor RHO. Required for normal RHO-mediated light perception by the retina (PubMed:22190596). Guanine nucleotide-binding proteins (G proteins) function as transducers downstream of G protein-coupled receptors (GPCRs), such as the photoreceptor RHO. The alpha chain contains the guanine nucleotide binding site and alternates between an active, GTP-bound state and an inactive, GDP-bound state. Activated RHO promotes GDP release and GTP binding. Signaling is mediated via downstream effector proteins, such as cGMP-phosphodiesterase (By similarity).</text>
</comment>
<comment type="subunit">
    <text evidence="2 9">Heterotrimeric G proteins are composed of 3 subunits alpha, beta and gamma. The alpha chain contains the guanine nucleotide binding site. Interacts with RHO. Interacts with RGS9 and PDE6G (By similarity). Interacts (when myristoylated) with UNC119; interaction is required for localization in sensory neurons (PubMed:21642972).</text>
</comment>
<comment type="subcellular location">
    <subcellularLocation>
        <location evidence="2">Cell projection</location>
        <location evidence="2">Cilium</location>
        <location evidence="2">Photoreceptor outer segment</location>
    </subcellularLocation>
    <subcellularLocation>
        <location evidence="2">Membrane</location>
        <topology evidence="2">Peripheral membrane protein</topology>
    </subcellularLocation>
    <subcellularLocation>
        <location evidence="3">Photoreceptor inner segment</location>
    </subcellularLocation>
    <text evidence="3">Localizes mainly in the outer segment in the dark-adapted state, whereas is translocated to the inner part of the photoreceptors in the light-adapted state. During dark-adapted conditions, in the presence of UNC119 mislocalizes from the outer segment to the inner part of rod photoreceptors which leads to decreased photoreceptor damage caused by light.</text>
</comment>
<comment type="tissue specificity">
    <text evidence="7 10">Rod photoreceptor cells (PubMed:1614872). Predominantly expressed in the retina followed by the ciliary body, iris and retinal pigment epithelium (PubMed:22190596).</text>
</comment>
<comment type="developmental stage">
    <text evidence="10">First detected at low levels at approximately postnatal day 7. Subsequently, expression increases rapidly during the first month after birth.</text>
</comment>
<comment type="disease" evidence="8 11">
    <disease id="DI-00373">
        <name>Night blindness, congenital stationary, autosomal dominant 3</name>
        <acronym>CSNBAD3</acronym>
        <description>A non-progressive retinal disorder characterized by impaired night vision, often associated with nystagmus and myopia.</description>
        <dbReference type="MIM" id="610444"/>
    </disease>
    <text>The disease is caused by variants affecting the gene represented in this entry.</text>
</comment>
<comment type="disease" evidence="10">
    <disease id="DI-04432">
        <name>Night blindness, congenital stationary, 1G</name>
        <acronym>CSNB1G</acronym>
        <description>An autosomal recessive form of congenital stationary night blindness, a non-progressive retinal disorder characterized by impaired night vision or in dim light, with good vision only on bright days.</description>
        <dbReference type="MIM" id="616389"/>
    </disease>
    <text>The disease is caused by variants affecting the gene represented in this entry.</text>
</comment>
<comment type="similarity">
    <text evidence="12">Belongs to the G-alpha family. G(i/o/t/z) subfamily.</text>
</comment>
<keyword id="KW-0002">3D-structure</keyword>
<keyword id="KW-0013">ADP-ribosylation</keyword>
<keyword id="KW-0966">Cell projection</keyword>
<keyword id="KW-1014">Congenital stationary night blindness</keyword>
<keyword id="KW-0225">Disease variant</keyword>
<keyword id="KW-0342">GTP-binding</keyword>
<keyword id="KW-0449">Lipoprotein</keyword>
<keyword id="KW-0460">Magnesium</keyword>
<keyword id="KW-0472">Membrane</keyword>
<keyword id="KW-0479">Metal-binding</keyword>
<keyword id="KW-0519">Myristate</keyword>
<keyword id="KW-0547">Nucleotide-binding</keyword>
<keyword id="KW-0597">Phosphoprotein</keyword>
<keyword id="KW-1267">Proteomics identification</keyword>
<keyword id="KW-1185">Reference proteome</keyword>
<keyword id="KW-0716">Sensory transduction</keyword>
<keyword id="KW-0807">Transducer</keyword>
<keyword id="KW-0844">Vision</keyword>
<proteinExistence type="evidence at protein level"/>